<protein>
    <recommendedName>
        <fullName evidence="1">ATP-dependent protease ATPase subunit HslU</fullName>
    </recommendedName>
    <alternativeName>
        <fullName evidence="1">Heat shock protein HslU</fullName>
    </alternativeName>
    <alternativeName>
        <fullName evidence="1">Unfoldase HslU</fullName>
    </alternativeName>
</protein>
<dbReference type="EMBL" id="FM200053">
    <property type="protein sequence ID" value="CAR61943.1"/>
    <property type="molecule type" value="Genomic_DNA"/>
</dbReference>
<dbReference type="RefSeq" id="WP_001293360.1">
    <property type="nucleotide sequence ID" value="NC_011147.1"/>
</dbReference>
<dbReference type="SMR" id="B5BJK8"/>
<dbReference type="KEGG" id="sek:SSPA3661"/>
<dbReference type="HOGENOM" id="CLU_033123_0_0_6"/>
<dbReference type="Proteomes" id="UP000001869">
    <property type="component" value="Chromosome"/>
</dbReference>
<dbReference type="GO" id="GO:0009376">
    <property type="term" value="C:HslUV protease complex"/>
    <property type="evidence" value="ECO:0007669"/>
    <property type="project" value="UniProtKB-UniRule"/>
</dbReference>
<dbReference type="GO" id="GO:0005524">
    <property type="term" value="F:ATP binding"/>
    <property type="evidence" value="ECO:0007669"/>
    <property type="project" value="UniProtKB-UniRule"/>
</dbReference>
<dbReference type="GO" id="GO:0016887">
    <property type="term" value="F:ATP hydrolysis activity"/>
    <property type="evidence" value="ECO:0007669"/>
    <property type="project" value="InterPro"/>
</dbReference>
<dbReference type="GO" id="GO:0008233">
    <property type="term" value="F:peptidase activity"/>
    <property type="evidence" value="ECO:0007669"/>
    <property type="project" value="InterPro"/>
</dbReference>
<dbReference type="GO" id="GO:0036402">
    <property type="term" value="F:proteasome-activating activity"/>
    <property type="evidence" value="ECO:0007669"/>
    <property type="project" value="UniProtKB-UniRule"/>
</dbReference>
<dbReference type="GO" id="GO:0043335">
    <property type="term" value="P:protein unfolding"/>
    <property type="evidence" value="ECO:0007669"/>
    <property type="project" value="UniProtKB-UniRule"/>
</dbReference>
<dbReference type="GO" id="GO:0051603">
    <property type="term" value="P:proteolysis involved in protein catabolic process"/>
    <property type="evidence" value="ECO:0007669"/>
    <property type="project" value="TreeGrafter"/>
</dbReference>
<dbReference type="CDD" id="cd19498">
    <property type="entry name" value="RecA-like_HslU"/>
    <property type="match status" value="1"/>
</dbReference>
<dbReference type="FunFam" id="1.10.8.10:FF:000012">
    <property type="entry name" value="ATP-dependent protease ATPase subunit HslU"/>
    <property type="match status" value="1"/>
</dbReference>
<dbReference type="FunFam" id="1.10.8.10:FF:000028">
    <property type="entry name" value="ATP-dependent protease ATPase subunit HslU"/>
    <property type="match status" value="1"/>
</dbReference>
<dbReference type="FunFam" id="1.10.8.60:FF:000027">
    <property type="entry name" value="ATP-dependent protease ATPase subunit HslU"/>
    <property type="match status" value="1"/>
</dbReference>
<dbReference type="FunFam" id="3.40.50.300:FF:000213">
    <property type="entry name" value="ATP-dependent protease ATPase subunit HslU"/>
    <property type="match status" value="1"/>
</dbReference>
<dbReference type="FunFam" id="3.40.50.300:FF:000220">
    <property type="entry name" value="ATP-dependent protease ATPase subunit HslU"/>
    <property type="match status" value="1"/>
</dbReference>
<dbReference type="Gene3D" id="1.10.8.60">
    <property type="match status" value="1"/>
</dbReference>
<dbReference type="Gene3D" id="1.10.8.10">
    <property type="entry name" value="DNA helicase RuvA subunit, C-terminal domain"/>
    <property type="match status" value="2"/>
</dbReference>
<dbReference type="Gene3D" id="3.40.50.300">
    <property type="entry name" value="P-loop containing nucleotide triphosphate hydrolases"/>
    <property type="match status" value="1"/>
</dbReference>
<dbReference type="HAMAP" id="MF_00249">
    <property type="entry name" value="HslU"/>
    <property type="match status" value="1"/>
</dbReference>
<dbReference type="InterPro" id="IPR003593">
    <property type="entry name" value="AAA+_ATPase"/>
</dbReference>
<dbReference type="InterPro" id="IPR050052">
    <property type="entry name" value="ATP-dep_Clp_protease_ClpX"/>
</dbReference>
<dbReference type="InterPro" id="IPR003959">
    <property type="entry name" value="ATPase_AAA_core"/>
</dbReference>
<dbReference type="InterPro" id="IPR019489">
    <property type="entry name" value="Clp_ATPase_C"/>
</dbReference>
<dbReference type="InterPro" id="IPR004491">
    <property type="entry name" value="HslU"/>
</dbReference>
<dbReference type="InterPro" id="IPR027417">
    <property type="entry name" value="P-loop_NTPase"/>
</dbReference>
<dbReference type="NCBIfam" id="TIGR00390">
    <property type="entry name" value="hslU"/>
    <property type="match status" value="1"/>
</dbReference>
<dbReference type="NCBIfam" id="NF003544">
    <property type="entry name" value="PRK05201.1"/>
    <property type="match status" value="1"/>
</dbReference>
<dbReference type="PANTHER" id="PTHR48102">
    <property type="entry name" value="ATP-DEPENDENT CLP PROTEASE ATP-BINDING SUBUNIT CLPX-LIKE, MITOCHONDRIAL-RELATED"/>
    <property type="match status" value="1"/>
</dbReference>
<dbReference type="PANTHER" id="PTHR48102:SF3">
    <property type="entry name" value="ATP-DEPENDENT PROTEASE ATPASE SUBUNIT HSLU"/>
    <property type="match status" value="1"/>
</dbReference>
<dbReference type="Pfam" id="PF00004">
    <property type="entry name" value="AAA"/>
    <property type="match status" value="1"/>
</dbReference>
<dbReference type="Pfam" id="PF07724">
    <property type="entry name" value="AAA_2"/>
    <property type="match status" value="1"/>
</dbReference>
<dbReference type="SMART" id="SM00382">
    <property type="entry name" value="AAA"/>
    <property type="match status" value="1"/>
</dbReference>
<dbReference type="SMART" id="SM01086">
    <property type="entry name" value="ClpB_D2-small"/>
    <property type="match status" value="1"/>
</dbReference>
<dbReference type="SUPFAM" id="SSF52540">
    <property type="entry name" value="P-loop containing nucleoside triphosphate hydrolases"/>
    <property type="match status" value="1"/>
</dbReference>
<feature type="chain" id="PRO_1000100974" description="ATP-dependent protease ATPase subunit HslU">
    <location>
        <begin position="1"/>
        <end position="443"/>
    </location>
</feature>
<feature type="binding site" evidence="1">
    <location>
        <position position="18"/>
    </location>
    <ligand>
        <name>ATP</name>
        <dbReference type="ChEBI" id="CHEBI:30616"/>
    </ligand>
</feature>
<feature type="binding site" evidence="1">
    <location>
        <begin position="60"/>
        <end position="65"/>
    </location>
    <ligand>
        <name>ATP</name>
        <dbReference type="ChEBI" id="CHEBI:30616"/>
    </ligand>
</feature>
<feature type="binding site" evidence="1">
    <location>
        <position position="256"/>
    </location>
    <ligand>
        <name>ATP</name>
        <dbReference type="ChEBI" id="CHEBI:30616"/>
    </ligand>
</feature>
<feature type="binding site" evidence="1">
    <location>
        <position position="321"/>
    </location>
    <ligand>
        <name>ATP</name>
        <dbReference type="ChEBI" id="CHEBI:30616"/>
    </ligand>
</feature>
<feature type="binding site" evidence="1">
    <location>
        <position position="393"/>
    </location>
    <ligand>
        <name>ATP</name>
        <dbReference type="ChEBI" id="CHEBI:30616"/>
    </ligand>
</feature>
<gene>
    <name evidence="1" type="primary">hslU</name>
    <name type="ordered locus">SSPA3661</name>
</gene>
<reference key="1">
    <citation type="journal article" date="2009" name="BMC Genomics">
        <title>Pseudogene accumulation in the evolutionary histories of Salmonella enterica serovars Paratyphi A and Typhi.</title>
        <authorList>
            <person name="Holt K.E."/>
            <person name="Thomson N.R."/>
            <person name="Wain J."/>
            <person name="Langridge G.C."/>
            <person name="Hasan R."/>
            <person name="Bhutta Z.A."/>
            <person name="Quail M.A."/>
            <person name="Norbertczak H."/>
            <person name="Walker D."/>
            <person name="Simmonds M."/>
            <person name="White B."/>
            <person name="Bason N."/>
            <person name="Mungall K."/>
            <person name="Dougan G."/>
            <person name="Parkhill J."/>
        </authorList>
    </citation>
    <scope>NUCLEOTIDE SEQUENCE [LARGE SCALE GENOMIC DNA]</scope>
    <source>
        <strain>AKU_12601</strain>
    </source>
</reference>
<sequence length="443" mass="49668">MSEMTPREIVSELNKHIIGQDNAKRSVAIALRNRWRRMQLDEELRHEVTPKNILMIGPTGVGKTEIARRLAKLANAPFIKVEATKFTEVGYVGKEVDSIIRDLTDAAVKMVRVQAIEKNRYRAEELAEERILDVLIPPAKNNWGQAEQQQEPSAARQTFRKKLREGQLDDKEIEINLAAAPMGVEIMAPPGMEEMTSQLQSMFQNLGGQKQKPRKLKIKDAMKLLVEEEAAKLVNPEELKQDAIDAVEQHGIVFIDEIDKICKRGETSGPDVSREGVQRDLLPLVEGCTVSTKHGMVKTDHILFIASGAFQVAKPSDLIPELQGRLPIRVELQALTTSDFERILTEPNASVTVQYKALMATEGVNIEFTDSGIKRIAEAAWQVNETTENIGARRLHTVLERLMEEISYNASDLHGQNITIDAEYVSKHLDALVADEDLSRFIL</sequence>
<evidence type="ECO:0000255" key="1">
    <source>
        <dbReference type="HAMAP-Rule" id="MF_00249"/>
    </source>
</evidence>
<proteinExistence type="inferred from homology"/>
<comment type="function">
    <text evidence="1">ATPase subunit of a proteasome-like degradation complex; this subunit has chaperone activity. The binding of ATP and its subsequent hydrolysis by HslU are essential for unfolding of protein substrates subsequently hydrolyzed by HslV. HslU recognizes the N-terminal part of its protein substrates and unfolds these before they are guided to HslV for hydrolysis.</text>
</comment>
<comment type="subunit">
    <text evidence="1">A double ring-shaped homohexamer of HslV is capped on each side by a ring-shaped HslU homohexamer. The assembly of the HslU/HslV complex is dependent on binding of ATP.</text>
</comment>
<comment type="subcellular location">
    <subcellularLocation>
        <location evidence="1">Cytoplasm</location>
    </subcellularLocation>
</comment>
<comment type="induction">
    <text evidence="1">By heat shock.</text>
</comment>
<comment type="similarity">
    <text evidence="1">Belongs to the ClpX chaperone family. HslU subfamily.</text>
</comment>
<organism>
    <name type="scientific">Salmonella paratyphi A (strain AKU_12601)</name>
    <dbReference type="NCBI Taxonomy" id="554290"/>
    <lineage>
        <taxon>Bacteria</taxon>
        <taxon>Pseudomonadati</taxon>
        <taxon>Pseudomonadota</taxon>
        <taxon>Gammaproteobacteria</taxon>
        <taxon>Enterobacterales</taxon>
        <taxon>Enterobacteriaceae</taxon>
        <taxon>Salmonella</taxon>
    </lineage>
</organism>
<accession>B5BJK8</accession>
<name>HSLU_SALPK</name>
<keyword id="KW-0067">ATP-binding</keyword>
<keyword id="KW-0143">Chaperone</keyword>
<keyword id="KW-0963">Cytoplasm</keyword>
<keyword id="KW-0547">Nucleotide-binding</keyword>
<keyword id="KW-0346">Stress response</keyword>